<dbReference type="EMBL" id="CP001598">
    <property type="protein sequence ID" value="ACQ45987.1"/>
    <property type="molecule type" value="Genomic_DNA"/>
</dbReference>
<dbReference type="RefSeq" id="WP_001984764.1">
    <property type="nucleotide sequence ID" value="NC_012659.1"/>
</dbReference>
<dbReference type="SMR" id="C3P693"/>
<dbReference type="GeneID" id="93007188"/>
<dbReference type="KEGG" id="bai:BAA_4088"/>
<dbReference type="HOGENOM" id="CLU_129084_1_3_9"/>
<dbReference type="GO" id="GO:0015934">
    <property type="term" value="C:large ribosomal subunit"/>
    <property type="evidence" value="ECO:0007669"/>
    <property type="project" value="InterPro"/>
</dbReference>
<dbReference type="GO" id="GO:0003735">
    <property type="term" value="F:structural constituent of ribosome"/>
    <property type="evidence" value="ECO:0007669"/>
    <property type="project" value="InterPro"/>
</dbReference>
<dbReference type="GO" id="GO:0006412">
    <property type="term" value="P:translation"/>
    <property type="evidence" value="ECO:0007669"/>
    <property type="project" value="UniProtKB-UniRule"/>
</dbReference>
<dbReference type="HAMAP" id="MF_00340">
    <property type="entry name" value="Ribosomal_bL32"/>
    <property type="match status" value="1"/>
</dbReference>
<dbReference type="InterPro" id="IPR002677">
    <property type="entry name" value="Ribosomal_bL32"/>
</dbReference>
<dbReference type="InterPro" id="IPR044957">
    <property type="entry name" value="Ribosomal_bL32_bact"/>
</dbReference>
<dbReference type="InterPro" id="IPR011332">
    <property type="entry name" value="Ribosomal_zn-bd"/>
</dbReference>
<dbReference type="NCBIfam" id="TIGR01031">
    <property type="entry name" value="rpmF_bact"/>
    <property type="match status" value="1"/>
</dbReference>
<dbReference type="PANTHER" id="PTHR35534">
    <property type="entry name" value="50S RIBOSOMAL PROTEIN L32"/>
    <property type="match status" value="1"/>
</dbReference>
<dbReference type="PANTHER" id="PTHR35534:SF2">
    <property type="entry name" value="LARGE RIBOSOMAL SUBUNIT PROTEIN BL32"/>
    <property type="match status" value="1"/>
</dbReference>
<dbReference type="Pfam" id="PF01783">
    <property type="entry name" value="Ribosomal_L32p"/>
    <property type="match status" value="1"/>
</dbReference>
<dbReference type="SUPFAM" id="SSF57829">
    <property type="entry name" value="Zn-binding ribosomal proteins"/>
    <property type="match status" value="1"/>
</dbReference>
<sequence>MAVPFRRTSKTVKRKRRTHFKLSVPGMVECPSCGEAKLAHRVCKACGTYKGKEVISK</sequence>
<proteinExistence type="inferred from homology"/>
<protein>
    <recommendedName>
        <fullName evidence="1">Large ribosomal subunit protein bL32</fullName>
    </recommendedName>
    <alternativeName>
        <fullName evidence="2">50S ribosomal protein L32</fullName>
    </alternativeName>
</protein>
<keyword id="KW-0687">Ribonucleoprotein</keyword>
<keyword id="KW-0689">Ribosomal protein</keyword>
<organism>
    <name type="scientific">Bacillus anthracis (strain A0248)</name>
    <dbReference type="NCBI Taxonomy" id="592021"/>
    <lineage>
        <taxon>Bacteria</taxon>
        <taxon>Bacillati</taxon>
        <taxon>Bacillota</taxon>
        <taxon>Bacilli</taxon>
        <taxon>Bacillales</taxon>
        <taxon>Bacillaceae</taxon>
        <taxon>Bacillus</taxon>
        <taxon>Bacillus cereus group</taxon>
    </lineage>
</organism>
<evidence type="ECO:0000255" key="1">
    <source>
        <dbReference type="HAMAP-Rule" id="MF_00340"/>
    </source>
</evidence>
<evidence type="ECO:0000305" key="2"/>
<reference key="1">
    <citation type="submission" date="2009-04" db="EMBL/GenBank/DDBJ databases">
        <title>Genome sequence of Bacillus anthracis A0248.</title>
        <authorList>
            <person name="Dodson R.J."/>
            <person name="Munk A.C."/>
            <person name="Bruce D."/>
            <person name="Detter C."/>
            <person name="Tapia R."/>
            <person name="Sutton G."/>
            <person name="Sims D."/>
            <person name="Brettin T."/>
        </authorList>
    </citation>
    <scope>NUCLEOTIDE SEQUENCE [LARGE SCALE GENOMIC DNA]</scope>
    <source>
        <strain>A0248</strain>
    </source>
</reference>
<name>RL32_BACAA</name>
<accession>C3P693</accession>
<gene>
    <name evidence="1" type="primary">rpmF</name>
    <name type="ordered locus">BAA_4088</name>
</gene>
<feature type="chain" id="PRO_1000195956" description="Large ribosomal subunit protein bL32">
    <location>
        <begin position="1"/>
        <end position="57"/>
    </location>
</feature>
<comment type="similarity">
    <text evidence="1">Belongs to the bacterial ribosomal protein bL32 family.</text>
</comment>